<dbReference type="EMBL" id="J02708">
    <property type="protein sequence ID" value="AAC13411.1"/>
    <property type="molecule type" value="Genomic_DNA"/>
</dbReference>
<dbReference type="EMBL" id="U00096">
    <property type="protein sequence ID" value="AAT48148.1"/>
    <property type="molecule type" value="Genomic_DNA"/>
</dbReference>
<dbReference type="EMBL" id="AP009048">
    <property type="protein sequence ID" value="BAA18886.2"/>
    <property type="molecule type" value="Genomic_DNA"/>
</dbReference>
<dbReference type="EMBL" id="X70016">
    <property type="protein sequence ID" value="CAA49614.1"/>
    <property type="molecule type" value="Genomic_DNA"/>
</dbReference>
<dbReference type="PIR" id="A26725">
    <property type="entry name" value="WQEC2S"/>
</dbReference>
<dbReference type="RefSeq" id="WP_000573321.1">
    <property type="nucleotide sequence ID" value="NZ_SSZK01000017.1"/>
</dbReference>
<dbReference type="RefSeq" id="YP_026180.1">
    <property type="nucleotide sequence ID" value="NC_000913.3"/>
</dbReference>
<dbReference type="BioGRID" id="4262078">
    <property type="interactions" value="19"/>
</dbReference>
<dbReference type="BioGRID" id="851891">
    <property type="interactions" value="1"/>
</dbReference>
<dbReference type="ComplexPortal" id="CPX-5969">
    <property type="entry name" value="Glucitol/sorbitol enzyme II complex"/>
</dbReference>
<dbReference type="FunCoup" id="P56579">
    <property type="interactions" value="91"/>
</dbReference>
<dbReference type="IntAct" id="P56579">
    <property type="interactions" value="1"/>
</dbReference>
<dbReference type="STRING" id="511145.b2702"/>
<dbReference type="TCDB" id="4.A.4.1.1">
    <property type="family name" value="the pts glucitol (gut) family"/>
</dbReference>
<dbReference type="PaxDb" id="511145-b2702"/>
<dbReference type="EnsemblBacteria" id="AAT48148">
    <property type="protein sequence ID" value="AAT48148"/>
    <property type="gene ID" value="b2702"/>
</dbReference>
<dbReference type="GeneID" id="93779309"/>
<dbReference type="GeneID" id="947575"/>
<dbReference type="KEGG" id="ecj:JW5429"/>
<dbReference type="KEGG" id="eco:b2702"/>
<dbReference type="KEGG" id="ecoc:C3026_14875"/>
<dbReference type="PATRIC" id="fig|1411691.4.peg.4040"/>
<dbReference type="EchoBASE" id="EB0962"/>
<dbReference type="eggNOG" id="COG3730">
    <property type="taxonomic scope" value="Bacteria"/>
</dbReference>
<dbReference type="HOGENOM" id="CLU_093147_0_0_6"/>
<dbReference type="InParanoid" id="P56579"/>
<dbReference type="OMA" id="HINPGEY"/>
<dbReference type="OrthoDB" id="9799765at2"/>
<dbReference type="PhylomeDB" id="P56579"/>
<dbReference type="BioCyc" id="EcoCyc:G8210-MONOMER"/>
<dbReference type="BioCyc" id="MetaCyc:G8210-MONOMER"/>
<dbReference type="PRO" id="PR:P56579"/>
<dbReference type="Proteomes" id="UP000000625">
    <property type="component" value="Chromosome"/>
</dbReference>
<dbReference type="GO" id="GO:0005886">
    <property type="term" value="C:plasma membrane"/>
    <property type="evidence" value="ECO:0007669"/>
    <property type="project" value="UniProtKB-SubCell"/>
</dbReference>
<dbReference type="GO" id="GO:1902495">
    <property type="term" value="C:transmembrane transporter complex"/>
    <property type="evidence" value="ECO:0000303"/>
    <property type="project" value="ComplexPortal"/>
</dbReference>
<dbReference type="GO" id="GO:0009401">
    <property type="term" value="P:phosphoenolpyruvate-dependent sugar phosphotransferase system"/>
    <property type="evidence" value="ECO:0000314"/>
    <property type="project" value="EcoCyc"/>
</dbReference>
<dbReference type="GO" id="GO:0015795">
    <property type="term" value="P:sorbitol transmembrane transport"/>
    <property type="evidence" value="ECO:0000303"/>
    <property type="project" value="ComplexPortal"/>
</dbReference>
<dbReference type="InterPro" id="IPR004699">
    <property type="entry name" value="PTS_IID_sorb"/>
</dbReference>
<dbReference type="NCBIfam" id="TIGR00821">
    <property type="entry name" value="EII-GUT"/>
    <property type="match status" value="1"/>
</dbReference>
<dbReference type="PANTHER" id="PTHR40399">
    <property type="entry name" value="PTS SYSTEM GLUCITOL/SORBITOL-SPECIFIC EIIC COMPONENT"/>
    <property type="match status" value="1"/>
</dbReference>
<dbReference type="PANTHER" id="PTHR40399:SF1">
    <property type="entry name" value="PTS SYSTEM GLUCITOL_SORBITOL-SPECIFIC EIIC COMPONENT"/>
    <property type="match status" value="1"/>
</dbReference>
<dbReference type="Pfam" id="PF03608">
    <property type="entry name" value="EII-GUT"/>
    <property type="match status" value="1"/>
</dbReference>
<dbReference type="PIRSF" id="PIRSF038321">
    <property type="entry name" value="PTS_glc_srb_IIC"/>
    <property type="match status" value="1"/>
</dbReference>
<dbReference type="PROSITE" id="PS51107">
    <property type="entry name" value="PTS_EIIC_TYPE_5"/>
    <property type="match status" value="1"/>
</dbReference>
<feature type="chain" id="PRO_0000186565" description="PTS system glucitol/sorbitol-specific EIIC component">
    <location>
        <begin position="1"/>
        <end position="187"/>
    </location>
</feature>
<feature type="topological domain" description="Periplasmic" evidence="1">
    <location>
        <begin position="1"/>
        <end position="28"/>
    </location>
</feature>
<feature type="transmembrane region" description="Helical" evidence="2">
    <location>
        <begin position="29"/>
        <end position="49"/>
    </location>
</feature>
<feature type="topological domain" description="Cytoplasmic" evidence="1">
    <location>
        <begin position="50"/>
        <end position="67"/>
    </location>
</feature>
<feature type="transmembrane region" description="Helical" evidence="2">
    <location>
        <begin position="68"/>
        <end position="88"/>
    </location>
</feature>
<feature type="topological domain" description="Periplasmic" evidence="1">
    <location>
        <begin position="89"/>
        <end position="131"/>
    </location>
</feature>
<feature type="transmembrane region" description="Helical" evidence="2">
    <location>
        <begin position="132"/>
        <end position="152"/>
    </location>
</feature>
<feature type="topological domain" description="Cytoplasmic" evidence="1">
    <location>
        <begin position="153"/>
        <end position="187"/>
    </location>
</feature>
<feature type="domain" description="PTS EIIC type-5" evidence="2">
    <location>
        <begin position="1"/>
        <end position="187"/>
    </location>
</feature>
<accession>P56579</accession>
<accession>P05705</accession>
<accession>P78102</accession>
<accession>P78214</accession>
<comment type="function">
    <text evidence="3">The phosphoenolpyruvate-dependent sugar phosphotransferase system (PTS), a major carbohydrate active transport system, catalyzes the phosphorylation of incoming sugar substrates concomitant with their translocation across the cell membrane. The enzyme II complex composed of SrlA, SrlB and SrlE is involved in glucitol/sorbitol transport. It can also use D-mannitol.</text>
</comment>
<comment type="subcellular location">
    <subcellularLocation>
        <location evidence="2 6">Cell inner membrane</location>
        <topology evidence="2 6">Multi-pass membrane protein</topology>
    </subcellularLocation>
</comment>
<comment type="induction">
    <text evidence="4">Regulated by an unusual system which consists of the activator GutM and the repressor GutR in addition to the cAMP-CRP complex.</text>
</comment>
<comment type="domain">
    <text evidence="2">The EIIC domain forms the PTS system translocation channel and contains the specific substrate-binding site.</text>
</comment>
<protein>
    <recommendedName>
        <fullName evidence="5">PTS system glucitol/sorbitol-specific EIIC component</fullName>
    </recommendedName>
    <alternativeName>
        <fullName evidence="5">EIIC-Gut</fullName>
    </alternativeName>
    <alternativeName>
        <fullName evidence="5">Glucitol/sorbitol permease IIC component</fullName>
    </alternativeName>
</protein>
<name>PTHC_ECOLI</name>
<sequence>MIETITHGAEWFIGLFQKGGEVFTGMVTGILPLLISLLVIMNALINFIGQHRIERFAQRCAGNPVSRYLLLPCIGTFVFCNPMTLSLGRFMPEKYKPSYYAAASYSCHSMNGLFPHINPGELFVYLGIASGLTTLNLPLGPLAVSYLLVGLVTNFFRGWVTDLTTAIFEKKMGIQLEQKVHLAGATS</sequence>
<evidence type="ECO:0000255" key="1"/>
<evidence type="ECO:0000255" key="2">
    <source>
        <dbReference type="PROSITE-ProRule" id="PRU00430"/>
    </source>
</evidence>
<evidence type="ECO:0000269" key="3">
    <source>
    </source>
</evidence>
<evidence type="ECO:0000269" key="4">
    <source>
    </source>
</evidence>
<evidence type="ECO:0000303" key="5">
    <source>
    </source>
</evidence>
<evidence type="ECO:0000305" key="6">
    <source>
    </source>
</evidence>
<gene>
    <name type="primary">srlA</name>
    <name type="synonym">gutA</name>
    <name type="synonym">sbl</name>
    <name type="ordered locus">b2702</name>
    <name type="ordered locus">JW5429</name>
</gene>
<reference key="1">
    <citation type="journal article" date="1987" name="J. Biol. Chem.">
        <title>Glucitol-specific enzymes of the phosphotransferase system in Escherichia coli. Nucleotide sequence of the gut operon.</title>
        <authorList>
            <person name="Yamada M."/>
            <person name="Saier M.H. Jr."/>
        </authorList>
    </citation>
    <scope>NUCLEOTIDE SEQUENCE [GENOMIC DNA]</scope>
    <scope>SUBCELLULAR LOCATION</scope>
</reference>
<reference key="2">
    <citation type="journal article" date="1998" name="Microbiology">
        <title>The glucitol permease of Escherichia coli: a tripartite permease of the phosphotransferase system.</title>
        <authorList>
            <person name="Reizer J."/>
            <person name="Reizer A."/>
            <person name="Yamada M."/>
            <person name="Saier M.H. Jr."/>
        </authorList>
    </citation>
    <scope>NUCLEOTIDE SEQUENCE [GENOMIC DNA]</scope>
    <scope>SEQUENCE REVISION</scope>
</reference>
<reference key="3">
    <citation type="journal article" date="1997" name="DNA Res.">
        <title>Construction of a contiguous 874-kb sequence of the Escherichia coli-K12 genome corresponding to 50.0-68.8 min on the linkage map and analysis of its sequence features.</title>
        <authorList>
            <person name="Yamamoto Y."/>
            <person name="Aiba H."/>
            <person name="Baba T."/>
            <person name="Hayashi K."/>
            <person name="Inada T."/>
            <person name="Isono K."/>
            <person name="Itoh T."/>
            <person name="Kimura S."/>
            <person name="Kitagawa M."/>
            <person name="Makino K."/>
            <person name="Miki T."/>
            <person name="Mitsuhashi N."/>
            <person name="Mizobuchi K."/>
            <person name="Mori H."/>
            <person name="Nakade S."/>
            <person name="Nakamura Y."/>
            <person name="Nashimoto H."/>
            <person name="Oshima T."/>
            <person name="Oyama S."/>
            <person name="Saito N."/>
            <person name="Sampei G."/>
            <person name="Satoh Y."/>
            <person name="Sivasundaram S."/>
            <person name="Tagami H."/>
            <person name="Takahashi H."/>
            <person name="Takeda J."/>
            <person name="Takemoto K."/>
            <person name="Uehara K."/>
            <person name="Wada C."/>
            <person name="Yamagata S."/>
            <person name="Horiuchi T."/>
        </authorList>
    </citation>
    <scope>NUCLEOTIDE SEQUENCE [LARGE SCALE GENOMIC DNA]</scope>
    <source>
        <strain>K12 / W3110 / ATCC 27325 / DSM 5911</strain>
    </source>
</reference>
<reference key="4">
    <citation type="journal article" date="1997" name="Science">
        <title>The complete genome sequence of Escherichia coli K-12.</title>
        <authorList>
            <person name="Blattner F.R."/>
            <person name="Plunkett G. III"/>
            <person name="Bloch C.A."/>
            <person name="Perna N.T."/>
            <person name="Burland V."/>
            <person name="Riley M."/>
            <person name="Collado-Vides J."/>
            <person name="Glasner J.D."/>
            <person name="Rode C.K."/>
            <person name="Mayhew G.F."/>
            <person name="Gregor J."/>
            <person name="Davis N.W."/>
            <person name="Kirkpatrick H.A."/>
            <person name="Goeden M.A."/>
            <person name="Rose D.J."/>
            <person name="Mau B."/>
            <person name="Shao Y."/>
        </authorList>
    </citation>
    <scope>NUCLEOTIDE SEQUENCE [LARGE SCALE GENOMIC DNA]</scope>
    <source>
        <strain>K12 / MG1655 / ATCC 47076</strain>
    </source>
</reference>
<reference key="5">
    <citation type="journal article" date="2006" name="Nucleic Acids Res.">
        <title>Escherichia coli K-12: a cooperatively developed annotation snapshot -- 2005.</title>
        <authorList>
            <person name="Riley M."/>
            <person name="Abe T."/>
            <person name="Arnaud M.B."/>
            <person name="Berlyn M.K.B."/>
            <person name="Blattner F.R."/>
            <person name="Chaudhuri R.R."/>
            <person name="Glasner J.D."/>
            <person name="Horiuchi T."/>
            <person name="Keseler I.M."/>
            <person name="Kosuge T."/>
            <person name="Mori H."/>
            <person name="Perna N.T."/>
            <person name="Plunkett G. III"/>
            <person name="Rudd K.E."/>
            <person name="Serres M.H."/>
            <person name="Thomas G.H."/>
            <person name="Thomson N.R."/>
            <person name="Wishart D."/>
            <person name="Wanner B.L."/>
        </authorList>
    </citation>
    <scope>SEQUENCE REVISION TO 21</scope>
</reference>
<reference key="6">
    <citation type="journal article" date="2006" name="Mol. Syst. Biol.">
        <title>Highly accurate genome sequences of Escherichia coli K-12 strains MG1655 and W3110.</title>
        <authorList>
            <person name="Hayashi K."/>
            <person name="Morooka N."/>
            <person name="Yamamoto Y."/>
            <person name="Fujita K."/>
            <person name="Isono K."/>
            <person name="Choi S."/>
            <person name="Ohtsubo E."/>
            <person name="Baba T."/>
            <person name="Wanner B.L."/>
            <person name="Mori H."/>
            <person name="Horiuchi T."/>
        </authorList>
    </citation>
    <scope>NUCLEOTIDE SEQUENCE [LARGE SCALE GENOMIC DNA]</scope>
    <source>
        <strain>K12 / W3110 / ATCC 27325 / DSM 5911</strain>
    </source>
</reference>
<reference key="7">
    <citation type="journal article" date="1992" name="Nature">
        <title>A whole genome approach to in vivo DNA-protein interactions in E. coli.</title>
        <authorList>
            <person name="Wang M.X."/>
            <person name="Church G.M."/>
        </authorList>
    </citation>
    <scope>NUCLEOTIDE SEQUENCE [GENOMIC DNA] OF 1-10</scope>
    <source>
        <strain>K12</strain>
    </source>
</reference>
<reference key="8">
    <citation type="journal article" date="1975" name="J. Bacteriol.">
        <title>Nature and properties of hexitol transport systems in Escherichia coli.</title>
        <authorList>
            <person name="Lengeler J."/>
        </authorList>
    </citation>
    <scope>FUNCTION</scope>
    <scope>SUBSTRATE SPECIFICITY</scope>
</reference>
<reference key="9">
    <citation type="journal article" date="1988" name="J. Mol. Biol.">
        <title>Positive and negative regulators for glucitol (gut) operon expression in Escherichia coli.</title>
        <authorList>
            <person name="Yamada M."/>
            <person name="Saier M.H. Jr."/>
        </authorList>
    </citation>
    <scope>INDUCTION</scope>
</reference>
<reference key="10">
    <citation type="journal article" date="2005" name="Science">
        <title>Global topology analysis of the Escherichia coli inner membrane proteome.</title>
        <authorList>
            <person name="Daley D.O."/>
            <person name="Rapp M."/>
            <person name="Granseth E."/>
            <person name="Melen K."/>
            <person name="Drew D."/>
            <person name="von Heijne G."/>
        </authorList>
    </citation>
    <scope>TOPOLOGY [LARGE SCALE ANALYSIS]</scope>
    <source>
        <strain>K12 / MG1655 / ATCC 47076</strain>
    </source>
</reference>
<organism>
    <name type="scientific">Escherichia coli (strain K12)</name>
    <dbReference type="NCBI Taxonomy" id="83333"/>
    <lineage>
        <taxon>Bacteria</taxon>
        <taxon>Pseudomonadati</taxon>
        <taxon>Pseudomonadota</taxon>
        <taxon>Gammaproteobacteria</taxon>
        <taxon>Enterobacterales</taxon>
        <taxon>Enterobacteriaceae</taxon>
        <taxon>Escherichia</taxon>
    </lineage>
</organism>
<proteinExistence type="evidence at protein level"/>
<keyword id="KW-0997">Cell inner membrane</keyword>
<keyword id="KW-1003">Cell membrane</keyword>
<keyword id="KW-0472">Membrane</keyword>
<keyword id="KW-0598">Phosphotransferase system</keyword>
<keyword id="KW-1185">Reference proteome</keyword>
<keyword id="KW-0762">Sugar transport</keyword>
<keyword id="KW-0812">Transmembrane</keyword>
<keyword id="KW-1133">Transmembrane helix</keyword>
<keyword id="KW-0813">Transport</keyword>